<accession>A1T636</accession>
<evidence type="ECO:0000255" key="1">
    <source>
        <dbReference type="HAMAP-Rule" id="MF_01600"/>
    </source>
</evidence>
<evidence type="ECO:0000256" key="2">
    <source>
        <dbReference type="SAM" id="MobiDB-lite"/>
    </source>
</evidence>
<gene>
    <name type="ordered locus">Mvan_1814</name>
</gene>
<dbReference type="EMBL" id="CP000511">
    <property type="protein sequence ID" value="ABM12636.1"/>
    <property type="molecule type" value="Genomic_DNA"/>
</dbReference>
<dbReference type="SMR" id="A1T636"/>
<dbReference type="STRING" id="350058.Mvan_1814"/>
<dbReference type="KEGG" id="mva:Mvan_1814"/>
<dbReference type="eggNOG" id="COG1615">
    <property type="taxonomic scope" value="Bacteria"/>
</dbReference>
<dbReference type="HOGENOM" id="CLU_007733_1_0_11"/>
<dbReference type="Proteomes" id="UP000009159">
    <property type="component" value="Chromosome"/>
</dbReference>
<dbReference type="GO" id="GO:0005576">
    <property type="term" value="C:extracellular region"/>
    <property type="evidence" value="ECO:0007669"/>
    <property type="project" value="TreeGrafter"/>
</dbReference>
<dbReference type="GO" id="GO:0005886">
    <property type="term" value="C:plasma membrane"/>
    <property type="evidence" value="ECO:0007669"/>
    <property type="project" value="UniProtKB-SubCell"/>
</dbReference>
<dbReference type="HAMAP" id="MF_01600">
    <property type="entry name" value="UPF0182"/>
    <property type="match status" value="1"/>
</dbReference>
<dbReference type="InterPro" id="IPR005372">
    <property type="entry name" value="UPF0182"/>
</dbReference>
<dbReference type="NCBIfam" id="NF000825">
    <property type="entry name" value="PRK00068.1"/>
    <property type="match status" value="1"/>
</dbReference>
<dbReference type="NCBIfam" id="NF009097">
    <property type="entry name" value="PRK12438.1"/>
    <property type="match status" value="1"/>
</dbReference>
<dbReference type="PANTHER" id="PTHR39344">
    <property type="entry name" value="UPF0182 PROTEIN SLL1060"/>
    <property type="match status" value="1"/>
</dbReference>
<dbReference type="PANTHER" id="PTHR39344:SF1">
    <property type="entry name" value="UPF0182 PROTEIN SLL1060"/>
    <property type="match status" value="1"/>
</dbReference>
<dbReference type="Pfam" id="PF03699">
    <property type="entry name" value="UPF0182"/>
    <property type="match status" value="1"/>
</dbReference>
<protein>
    <recommendedName>
        <fullName evidence="1">UPF0182 protein Mvan_1814</fullName>
    </recommendedName>
</protein>
<proteinExistence type="inferred from homology"/>
<comment type="subcellular location">
    <subcellularLocation>
        <location evidence="1">Cell membrane</location>
        <topology evidence="1">Multi-pass membrane protein</topology>
    </subcellularLocation>
</comment>
<comment type="similarity">
    <text evidence="1">Belongs to the UPF0182 family.</text>
</comment>
<organism>
    <name type="scientific">Mycolicibacterium vanbaalenii (strain DSM 7251 / JCM 13017 / BCRC 16820 / KCTC 9966 / NRRL B-24157 / PYR-1)</name>
    <name type="common">Mycobacterium vanbaalenii</name>
    <dbReference type="NCBI Taxonomy" id="350058"/>
    <lineage>
        <taxon>Bacteria</taxon>
        <taxon>Bacillati</taxon>
        <taxon>Actinomycetota</taxon>
        <taxon>Actinomycetes</taxon>
        <taxon>Mycobacteriales</taxon>
        <taxon>Mycobacteriaceae</taxon>
        <taxon>Mycolicibacterium</taxon>
    </lineage>
</organism>
<feature type="chain" id="PRO_5000207273" description="UPF0182 protein Mvan_1814">
    <location>
        <begin position="1"/>
        <end position="1002"/>
    </location>
</feature>
<feature type="transmembrane region" description="Helical" evidence="1">
    <location>
        <begin position="16"/>
        <end position="36"/>
    </location>
</feature>
<feature type="transmembrane region" description="Helical" evidence="1">
    <location>
        <begin position="61"/>
        <end position="81"/>
    </location>
</feature>
<feature type="transmembrane region" description="Helical" evidence="1">
    <location>
        <begin position="112"/>
        <end position="132"/>
    </location>
</feature>
<feature type="transmembrane region" description="Helical" evidence="1">
    <location>
        <begin position="174"/>
        <end position="194"/>
    </location>
</feature>
<feature type="transmembrane region" description="Helical" evidence="1">
    <location>
        <begin position="209"/>
        <end position="229"/>
    </location>
</feature>
<feature type="transmembrane region" description="Helical" evidence="1">
    <location>
        <begin position="258"/>
        <end position="278"/>
    </location>
</feature>
<feature type="transmembrane region" description="Helical" evidence="1">
    <location>
        <begin position="286"/>
        <end position="306"/>
    </location>
</feature>
<feature type="region of interest" description="Disordered" evidence="2">
    <location>
        <begin position="891"/>
        <end position="958"/>
    </location>
</feature>
<feature type="compositionally biased region" description="Low complexity" evidence="2">
    <location>
        <begin position="893"/>
        <end position="923"/>
    </location>
</feature>
<feature type="compositionally biased region" description="Pro residues" evidence="2">
    <location>
        <begin position="937"/>
        <end position="950"/>
    </location>
</feature>
<sequence>MRPAARMPNLTRRSRVMIAVALAVVVLLLLGPRLVDTYVNWLWFGELGYRSVFTTQIVTRLLLFLAVAVVFGAVVFAAMALAYRTRPVFVPTAGPNDPIARYRTAVMARLRLVGIGVPVAVGLLAGLIAQNYWQRVQLFLHGGSFGVSDPQFGIDLGFYAFDLPFYRLMLTYLFAATFLAFIANLLGHYLFGGIRLAGRSGALSRAARIQLIALVGFLMLLKAVAYWLDRYELLSHTRGGKPFTGAGYTDINAVLPAKLILMVIAVICAAAVFSAIVLRDLRIPAIGVVLLLLSSLIVGAGWPLVVEQISVRPNAAQKESEYISRSITATRQAYGLTDEAVEYRDYPGNATATAQQVAADRATTSNIRVLDPNIVSPAFTQFQQGKNFYFFPDQLNMDRYRDEDGNLRDYVVAARELNPDRLIDNQRDWINRHSVYTHGNGFIASPANTVRGIANDPNQNGGYPEFLASVVGANGEVVSPGPAPLDQPRIYFGPVIANTPADYAIVGESGTPREYDYETNTATRNYTYTGSGGVPIGNWLTRSVFAAKYAERNFLFSNVIGENSKILFNRDPADRVEAVAPWLTTDTAVYPAIVNKRIVWIVDGYTTLDNYPYSELMSLSSATTDSNEVALNRLQPDKQVSYIRNSVKATVDAYDGTVTLYAQDEQDPVLQAWMKVFPDTVKPKADITPELQEHLRYPEDLFKVQRALLAKYHVDDPVTFFSTSDFWDVPLDPNPTASSYQPPYYIVAKDLAENNNSSSFQLTSAMNRFRRDFLAAYISASSDPETYGKLTVLTIPGQVNGPKLAFNAISTDTAVSQDLGVIGRDNQNRIRWGNLLTLPMGQGGLLYVAPVYASPGASDAASSYPRLIRVAMMYNDQIGYGPTVRDALTDLFGPGADATATGPAATEPPAGQAPQPQGNNQPPAAAPPNRPGQAPTPQQPEVPVAVPPTGPTQLSAGKAAALQDVNAALDALQDAQRSGDFAQYGEALQRLDDAVNKYQATN</sequence>
<reference key="1">
    <citation type="submission" date="2006-12" db="EMBL/GenBank/DDBJ databases">
        <title>Complete sequence of Mycobacterium vanbaalenii PYR-1.</title>
        <authorList>
            <consortium name="US DOE Joint Genome Institute"/>
            <person name="Copeland A."/>
            <person name="Lucas S."/>
            <person name="Lapidus A."/>
            <person name="Barry K."/>
            <person name="Detter J.C."/>
            <person name="Glavina del Rio T."/>
            <person name="Hammon N."/>
            <person name="Israni S."/>
            <person name="Dalin E."/>
            <person name="Tice H."/>
            <person name="Pitluck S."/>
            <person name="Singan V."/>
            <person name="Schmutz J."/>
            <person name="Larimer F."/>
            <person name="Land M."/>
            <person name="Hauser L."/>
            <person name="Kyrpides N."/>
            <person name="Anderson I.J."/>
            <person name="Miller C."/>
            <person name="Richardson P."/>
        </authorList>
    </citation>
    <scope>NUCLEOTIDE SEQUENCE [LARGE SCALE GENOMIC DNA]</scope>
    <source>
        <strain>DSM 7251 / JCM 13017 / BCRC 16820 / KCTC 9966 / NRRL B-24157 / PYR-1</strain>
    </source>
</reference>
<keyword id="KW-1003">Cell membrane</keyword>
<keyword id="KW-0472">Membrane</keyword>
<keyword id="KW-0812">Transmembrane</keyword>
<keyword id="KW-1133">Transmembrane helix</keyword>
<name>Y1814_MYCVP</name>